<name>APRR6_ARATH</name>
<dbReference type="EMBL" id="AC016447">
    <property type="protein sequence ID" value="AAG52609.1"/>
    <property type="status" value="ALT_SEQ"/>
    <property type="molecule type" value="Genomic_DNA"/>
</dbReference>
<dbReference type="EMBL" id="CP002684">
    <property type="protein sequence ID" value="AEE34765.1"/>
    <property type="molecule type" value="Genomic_DNA"/>
</dbReference>
<dbReference type="PIR" id="E96705">
    <property type="entry name" value="E96705"/>
</dbReference>
<dbReference type="RefSeq" id="NP_176988.4">
    <property type="nucleotide sequence ID" value="NM_105492.4"/>
</dbReference>
<dbReference type="SMR" id="Q9C9F6"/>
<dbReference type="FunCoup" id="Q9C9F6">
    <property type="interactions" value="289"/>
</dbReference>
<dbReference type="STRING" id="3702.Q9C9F6"/>
<dbReference type="iPTMnet" id="Q9C9F6"/>
<dbReference type="PaxDb" id="3702-AT1G68210.1"/>
<dbReference type="EnsemblPlants" id="AT1G68210.1">
    <property type="protein sequence ID" value="AT1G68210.1"/>
    <property type="gene ID" value="AT1G68210"/>
</dbReference>
<dbReference type="GeneID" id="843150"/>
<dbReference type="Gramene" id="AT1G68210.1">
    <property type="protein sequence ID" value="AT1G68210.1"/>
    <property type="gene ID" value="AT1G68210"/>
</dbReference>
<dbReference type="KEGG" id="ath:AT1G68210"/>
<dbReference type="Araport" id="AT1G68210"/>
<dbReference type="TAIR" id="AT1G68210">
    <property type="gene designation" value="APRR6"/>
</dbReference>
<dbReference type="eggNOG" id="KOG1601">
    <property type="taxonomic scope" value="Eukaryota"/>
</dbReference>
<dbReference type="HOGENOM" id="CLU_021448_0_0_1"/>
<dbReference type="InParanoid" id="Q9C9F6"/>
<dbReference type="OMA" id="WIDDIFT"/>
<dbReference type="OrthoDB" id="1743485at2759"/>
<dbReference type="PRO" id="PR:Q9C9F6"/>
<dbReference type="Proteomes" id="UP000006548">
    <property type="component" value="Chromosome 1"/>
</dbReference>
<dbReference type="ExpressionAtlas" id="Q9C9F6">
    <property type="expression patterns" value="baseline and differential"/>
</dbReference>
<dbReference type="GO" id="GO:0005634">
    <property type="term" value="C:nucleus"/>
    <property type="evidence" value="ECO:0007669"/>
    <property type="project" value="UniProtKB-SubCell"/>
</dbReference>
<dbReference type="GO" id="GO:0003677">
    <property type="term" value="F:DNA binding"/>
    <property type="evidence" value="ECO:0007669"/>
    <property type="project" value="InterPro"/>
</dbReference>
<dbReference type="GO" id="GO:0000160">
    <property type="term" value="P:phosphorelay signal transduction system"/>
    <property type="evidence" value="ECO:0007669"/>
    <property type="project" value="UniProtKB-KW"/>
</dbReference>
<dbReference type="GO" id="GO:0006355">
    <property type="term" value="P:regulation of DNA-templated transcription"/>
    <property type="evidence" value="ECO:0000304"/>
    <property type="project" value="TAIR"/>
</dbReference>
<dbReference type="CDD" id="cd17584">
    <property type="entry name" value="REC_typeB_ARR-like"/>
    <property type="match status" value="1"/>
</dbReference>
<dbReference type="FunFam" id="1.10.10.60:FF:000007">
    <property type="entry name" value="Two-component response regulator"/>
    <property type="match status" value="1"/>
</dbReference>
<dbReference type="Gene3D" id="3.40.50.2300">
    <property type="match status" value="1"/>
</dbReference>
<dbReference type="Gene3D" id="1.10.10.60">
    <property type="entry name" value="Homeodomain-like"/>
    <property type="match status" value="1"/>
</dbReference>
<dbReference type="InterPro" id="IPR011006">
    <property type="entry name" value="CheY-like_superfamily"/>
</dbReference>
<dbReference type="InterPro" id="IPR009057">
    <property type="entry name" value="Homeodomain-like_sf"/>
</dbReference>
<dbReference type="InterPro" id="IPR006447">
    <property type="entry name" value="Myb_dom_plants"/>
</dbReference>
<dbReference type="InterPro" id="IPR001789">
    <property type="entry name" value="Sig_transdc_resp-reg_receiver"/>
</dbReference>
<dbReference type="NCBIfam" id="TIGR01557">
    <property type="entry name" value="myb_SHAQKYF"/>
    <property type="match status" value="1"/>
</dbReference>
<dbReference type="PANTHER" id="PTHR43367">
    <property type="match status" value="1"/>
</dbReference>
<dbReference type="PANTHER" id="PTHR43367:SF1">
    <property type="entry name" value="TWO-COMPONENT RESPONSE REGULATOR-LIKE APRR6-RELATED"/>
    <property type="match status" value="1"/>
</dbReference>
<dbReference type="SUPFAM" id="SSF52172">
    <property type="entry name" value="CheY-like"/>
    <property type="match status" value="1"/>
</dbReference>
<dbReference type="SUPFAM" id="SSF46689">
    <property type="entry name" value="Homeodomain-like"/>
    <property type="match status" value="1"/>
</dbReference>
<dbReference type="PROSITE" id="PS50110">
    <property type="entry name" value="RESPONSE_REGULATORY"/>
    <property type="match status" value="1"/>
</dbReference>
<comment type="subcellular location">
    <subcellularLocation>
        <location evidence="2">Nucleus</location>
    </subcellularLocation>
</comment>
<comment type="similarity">
    <text evidence="2">Belongs to the ARR-like family.</text>
</comment>
<comment type="caution">
    <text evidence="2">Lacks the phospho-accepting Asp (here Asn-65), present in the receiver domain, which is one of the conserved features of the two-component response regulators (ARRs) family.</text>
</comment>
<comment type="sequence caution" evidence="2">
    <conflict type="erroneous gene model prediction">
        <sequence resource="EMBL-CDS" id="AAG52609"/>
    </conflict>
</comment>
<keyword id="KW-0539">Nucleus</keyword>
<keyword id="KW-1185">Reference proteome</keyword>
<keyword id="KW-0804">Transcription</keyword>
<keyword id="KW-0805">Transcription regulation</keyword>
<keyword id="KW-0902">Two-component regulatory system</keyword>
<organism>
    <name type="scientific">Arabidopsis thaliana</name>
    <name type="common">Mouse-ear cress</name>
    <dbReference type="NCBI Taxonomy" id="3702"/>
    <lineage>
        <taxon>Eukaryota</taxon>
        <taxon>Viridiplantae</taxon>
        <taxon>Streptophyta</taxon>
        <taxon>Embryophyta</taxon>
        <taxon>Tracheophyta</taxon>
        <taxon>Spermatophyta</taxon>
        <taxon>Magnoliopsida</taxon>
        <taxon>eudicotyledons</taxon>
        <taxon>Gunneridae</taxon>
        <taxon>Pentapetalae</taxon>
        <taxon>rosids</taxon>
        <taxon>malvids</taxon>
        <taxon>Brassicales</taxon>
        <taxon>Brassicaceae</taxon>
        <taxon>Camelineae</taxon>
        <taxon>Arabidopsis</taxon>
    </lineage>
</organism>
<proteinExistence type="inferred from homology"/>
<protein>
    <recommendedName>
        <fullName>Putative two-component response regulator-like APRR6</fullName>
    </recommendedName>
    <alternativeName>
        <fullName>Pseudo-response regulator 6</fullName>
    </alternativeName>
</protein>
<reference key="1">
    <citation type="journal article" date="2000" name="Nature">
        <title>Sequence and analysis of chromosome 1 of the plant Arabidopsis thaliana.</title>
        <authorList>
            <person name="Theologis A."/>
            <person name="Ecker J.R."/>
            <person name="Palm C.J."/>
            <person name="Federspiel N.A."/>
            <person name="Kaul S."/>
            <person name="White O."/>
            <person name="Alonso J."/>
            <person name="Altafi H."/>
            <person name="Araujo R."/>
            <person name="Bowman C.L."/>
            <person name="Brooks S.Y."/>
            <person name="Buehler E."/>
            <person name="Chan A."/>
            <person name="Chao Q."/>
            <person name="Chen H."/>
            <person name="Cheuk R.F."/>
            <person name="Chin C.W."/>
            <person name="Chung M.K."/>
            <person name="Conn L."/>
            <person name="Conway A.B."/>
            <person name="Conway A.R."/>
            <person name="Creasy T.H."/>
            <person name="Dewar K."/>
            <person name="Dunn P."/>
            <person name="Etgu P."/>
            <person name="Feldblyum T.V."/>
            <person name="Feng J.-D."/>
            <person name="Fong B."/>
            <person name="Fujii C.Y."/>
            <person name="Gill J.E."/>
            <person name="Goldsmith A.D."/>
            <person name="Haas B."/>
            <person name="Hansen N.F."/>
            <person name="Hughes B."/>
            <person name="Huizar L."/>
            <person name="Hunter J.L."/>
            <person name="Jenkins J."/>
            <person name="Johnson-Hopson C."/>
            <person name="Khan S."/>
            <person name="Khaykin E."/>
            <person name="Kim C.J."/>
            <person name="Koo H.L."/>
            <person name="Kremenetskaia I."/>
            <person name="Kurtz D.B."/>
            <person name="Kwan A."/>
            <person name="Lam B."/>
            <person name="Langin-Hooper S."/>
            <person name="Lee A."/>
            <person name="Lee J.M."/>
            <person name="Lenz C.A."/>
            <person name="Li J.H."/>
            <person name="Li Y.-P."/>
            <person name="Lin X."/>
            <person name="Liu S.X."/>
            <person name="Liu Z.A."/>
            <person name="Luros J.S."/>
            <person name="Maiti R."/>
            <person name="Marziali A."/>
            <person name="Militscher J."/>
            <person name="Miranda M."/>
            <person name="Nguyen M."/>
            <person name="Nierman W.C."/>
            <person name="Osborne B.I."/>
            <person name="Pai G."/>
            <person name="Peterson J."/>
            <person name="Pham P.K."/>
            <person name="Rizzo M."/>
            <person name="Rooney T."/>
            <person name="Rowley D."/>
            <person name="Sakano H."/>
            <person name="Salzberg S.L."/>
            <person name="Schwartz J.R."/>
            <person name="Shinn P."/>
            <person name="Southwick A.M."/>
            <person name="Sun H."/>
            <person name="Tallon L.J."/>
            <person name="Tambunga G."/>
            <person name="Toriumi M.J."/>
            <person name="Town C.D."/>
            <person name="Utterback T."/>
            <person name="Van Aken S."/>
            <person name="Vaysberg M."/>
            <person name="Vysotskaia V.S."/>
            <person name="Walker M."/>
            <person name="Wu D."/>
            <person name="Yu G."/>
            <person name="Fraser C.M."/>
            <person name="Venter J.C."/>
            <person name="Davis R.W."/>
        </authorList>
    </citation>
    <scope>NUCLEOTIDE SEQUENCE [LARGE SCALE GENOMIC DNA]</scope>
    <source>
        <strain>cv. Columbia</strain>
    </source>
</reference>
<reference key="2">
    <citation type="journal article" date="2017" name="Plant J.">
        <title>Araport11: a complete reannotation of the Arabidopsis thaliana reference genome.</title>
        <authorList>
            <person name="Cheng C.Y."/>
            <person name="Krishnakumar V."/>
            <person name="Chan A.P."/>
            <person name="Thibaud-Nissen F."/>
            <person name="Schobel S."/>
            <person name="Town C.D."/>
        </authorList>
    </citation>
    <scope>GENOME REANNOTATION</scope>
    <source>
        <strain>cv. Columbia</strain>
    </source>
</reference>
<reference key="3">
    <citation type="journal article" date="2000" name="Plant Cell Physiol.">
        <title>Genes encoding pseudo-response regulators: insight into His-to-Asp phosphorelay and circadian rhythm in Arabidopsis thaliana.</title>
        <authorList>
            <person name="Makino S."/>
            <person name="Kiba T."/>
            <person name="Imamura A."/>
            <person name="Hanaki N."/>
            <person name="Nakamura A."/>
            <person name="Suzuki T."/>
            <person name="Taniguchi M."/>
            <person name="Ueguchi C."/>
            <person name="Sugiyama T."/>
            <person name="Mizuno T."/>
        </authorList>
    </citation>
    <scope>GENE FAMILY</scope>
</reference>
<evidence type="ECO:0000255" key="1">
    <source>
        <dbReference type="PROSITE-ProRule" id="PRU00169"/>
    </source>
</evidence>
<evidence type="ECO:0000305" key="2"/>
<sequence>MAGCLVPECADDISILLIDHDTASIASLTSMLQQFSKRVMSVDVASKALSMIEKQKKEIGLIIANIEMPHIDSHSFLNALLLKDIPLILINPEIKTKEPSDLLTKRACFSLDKPISNDDIKNMWQHVFSKKSQELKKINITEDQENVMDKDTYQIEAFRANLKRQRISQASLLGRRPFIDTFSTYETFQKRKSIANVEWKTTPSYAIEIENKRKEWKKSVGRRKSLWNSERHMKFIAAISILGEEDFRPKSILEIMNDPNLTHRQVGSHLQKYKAQIDQISYTLPRNESRSIDKTFEYPSNYKYPFKISDLTNNLIVSNSLWNSLEKKNSASASITQFLFKKPIGEKEETMPKFHIGGKLDLSNHSVHGNVLNKLSMNVNFVPSTISNNPAYNILSIDSSSIDSSSYTGLVSTGLSSENSPILYGLPSNDGASNTCTSQMESERISIPQYDPNQCHPHRSILETDVNQIDLDFTSILDSFDPLVDECLMKENNRFLPNPTMNLLDTDIDKMDWVSFIENLSHHDINMNHMDWDPSTANYVLPETNMNINFPEKHTNEIGWVSSQVGYVPFENMIPSEVDINHMGMGYSGGSIPPQEETNTNNVGFVSCEIHSEIPPKTNMAILETNYSNPLDWVFPEDITSLETNTIQKSLVSCETSYDALDNMVPLETNMEEMNDALYDISIEDLISFDIDANEKDIFSWLEDNGFSEENNMMESCEYHNIESVNQSDDMKIDDNFDDYRECMDWINEEMNKDV</sequence>
<feature type="chain" id="PRO_0000081438" description="Putative two-component response regulator-like APRR6">
    <location>
        <begin position="1"/>
        <end position="755"/>
    </location>
</feature>
<feature type="domain" description="Response regulatory" evidence="1">
    <location>
        <begin position="14"/>
        <end position="128"/>
    </location>
</feature>
<gene>
    <name type="primary">APRR6</name>
    <name type="ordered locus">At1g68210</name>
    <name type="ORF">T22E19.16</name>
</gene>
<accession>Q9C9F6</accession>
<accession>F4HX69</accession>